<protein>
    <recommendedName>
        <fullName evidence="2">Aconitate isomerase</fullName>
        <shortName evidence="2">AI</shortName>
        <ecNumber evidence="1">5.3.3.7</ecNumber>
    </recommendedName>
</protein>
<organism>
    <name type="scientific">Pseudomonas sp</name>
    <dbReference type="NCBI Taxonomy" id="306"/>
    <lineage>
        <taxon>Bacteria</taxon>
        <taxon>Pseudomonadati</taxon>
        <taxon>Pseudomonadota</taxon>
        <taxon>Gammaproteobacteria</taxon>
        <taxon>Pseudomonadales</taxon>
        <taxon>Pseudomonadaceae</taxon>
        <taxon>Pseudomonas</taxon>
    </lineage>
</organism>
<dbReference type="EC" id="5.3.3.7" evidence="1"/>
<dbReference type="EMBL" id="LC010980">
    <property type="protein sequence ID" value="BAP90747.1"/>
    <property type="molecule type" value="Genomic_DNA"/>
</dbReference>
<dbReference type="SMR" id="A0A0A1H8I4"/>
<dbReference type="KEGG" id="ag:BAP90747"/>
<dbReference type="BRENDA" id="5.3.3.7">
    <property type="organism ID" value="16133"/>
</dbReference>
<dbReference type="SABIO-RK" id="A0A0A1H8I4"/>
<dbReference type="GO" id="GO:0047614">
    <property type="term" value="F:aconitate delta-isomerase activity"/>
    <property type="evidence" value="ECO:0000314"/>
    <property type="project" value="UniProtKB"/>
</dbReference>
<dbReference type="GO" id="GO:0030973">
    <property type="term" value="F:molybdate ion binding"/>
    <property type="evidence" value="ECO:0007669"/>
    <property type="project" value="TreeGrafter"/>
</dbReference>
<dbReference type="GO" id="GO:0071277">
    <property type="term" value="P:cellular response to calcium ion"/>
    <property type="evidence" value="ECO:0000314"/>
    <property type="project" value="UniProtKB"/>
</dbReference>
<dbReference type="GO" id="GO:0071281">
    <property type="term" value="P:cellular response to iron ion"/>
    <property type="evidence" value="ECO:0000314"/>
    <property type="project" value="UniProtKB"/>
</dbReference>
<dbReference type="GO" id="GO:0071286">
    <property type="term" value="P:cellular response to magnesium ion"/>
    <property type="evidence" value="ECO:0000314"/>
    <property type="project" value="UniProtKB"/>
</dbReference>
<dbReference type="GO" id="GO:0071287">
    <property type="term" value="P:cellular response to manganese ion"/>
    <property type="evidence" value="ECO:0000314"/>
    <property type="project" value="UniProtKB"/>
</dbReference>
<dbReference type="GO" id="GO:0071289">
    <property type="term" value="P:cellular response to nickel ion"/>
    <property type="evidence" value="ECO:0000314"/>
    <property type="project" value="UniProtKB"/>
</dbReference>
<dbReference type="GO" id="GO:0071292">
    <property type="term" value="P:cellular response to silver ion"/>
    <property type="evidence" value="ECO:0000314"/>
    <property type="project" value="UniProtKB"/>
</dbReference>
<dbReference type="GO" id="GO:0015689">
    <property type="term" value="P:molybdate ion transport"/>
    <property type="evidence" value="ECO:0007669"/>
    <property type="project" value="TreeGrafter"/>
</dbReference>
<dbReference type="GO" id="GO:0046680">
    <property type="term" value="P:response to DDT"/>
    <property type="evidence" value="ECO:0000314"/>
    <property type="project" value="UniProtKB"/>
</dbReference>
<dbReference type="GO" id="GO:0046689">
    <property type="term" value="P:response to mercury ion"/>
    <property type="evidence" value="ECO:0000314"/>
    <property type="project" value="UniProtKB"/>
</dbReference>
<dbReference type="Gene3D" id="3.40.190.10">
    <property type="entry name" value="Periplasmic binding protein-like II"/>
    <property type="match status" value="2"/>
</dbReference>
<dbReference type="InterPro" id="IPR050682">
    <property type="entry name" value="ModA/WtpA"/>
</dbReference>
<dbReference type="PANTHER" id="PTHR30632:SF11">
    <property type="entry name" value="BLR4797 PROTEIN"/>
    <property type="match status" value="1"/>
</dbReference>
<dbReference type="PANTHER" id="PTHR30632">
    <property type="entry name" value="MOLYBDATE-BINDING PERIPLASMIC PROTEIN"/>
    <property type="match status" value="1"/>
</dbReference>
<dbReference type="Pfam" id="PF13531">
    <property type="entry name" value="SBP_bac_11"/>
    <property type="match status" value="1"/>
</dbReference>
<dbReference type="SUPFAM" id="SSF53850">
    <property type="entry name" value="Periplasmic binding protein-like II"/>
    <property type="match status" value="1"/>
</dbReference>
<gene>
    <name evidence="3" type="primary">ais</name>
</gene>
<comment type="function">
    <text evidence="1">Involved in assimilation of trans-aconitic acid. Preference for cis-aconitic acid is 14-fold higher than for trans-aconitic acid. Not active on intermediates of tricarboxylic acid (TCA) cycle including citric acid, succinic acid, fumaric acid, and 2-oxoglutaric acid or on other dicarboxilic acids including itaconic acid, formic acid, citraconic acid or maleic acid.</text>
</comment>
<comment type="catalytic activity">
    <reaction evidence="1">
        <text>trans-aconitate = cis-aconitate</text>
        <dbReference type="Rhea" id="RHEA:17265"/>
        <dbReference type="ChEBI" id="CHEBI:15708"/>
        <dbReference type="ChEBI" id="CHEBI:16383"/>
        <dbReference type="EC" id="5.3.3.7"/>
    </reaction>
</comment>
<comment type="activity regulation">
    <text evidence="1">Activated more than 1.5 fold by Ca(2+), Mg(2+), Mn(2+), Ni(2+), Fe(2+), DDT and 1,10-phenanthroline. Strongly inhibited by Ag(+) and Hg(+). Inhibited by addition of 20% (v/v) glycerol. No effect by addition of NADH or NADPH.</text>
</comment>
<comment type="biophysicochemical properties">
    <kinetics>
        <KM evidence="1">5.9 mM for cis-aconitic acid</KM>
        <KM evidence="1">80 mM for trans-aconitic acid</KM>
        <text evidence="1">kcat and kcat/KM are 4500 sec(-1) and 760 sec(-1) mM(-1), respectively for cis-aconitic acid. kcat and kcat/KM are 15000 sec(-1) and 190 sec(-1) mM(-1), respectively for trans-aconitic acid.</text>
    </kinetics>
    <phDependence>
        <text evidence="1">Optimum pH is 6.0.</text>
    </phDependence>
    <temperatureDependence>
        <text evidence="1">Optimum temperature is 37 degrees Celsius.</text>
    </temperatureDependence>
</comment>
<comment type="subunit">
    <text evidence="1">Monomer.</text>
</comment>
<comment type="biotechnology">
    <text evidence="2">May be useful in development of a bioprocess for effective production of trans-aconitic acid.</text>
</comment>
<evidence type="ECO:0000269" key="1">
    <source>
    </source>
</evidence>
<evidence type="ECO:0000303" key="2">
    <source>
    </source>
</evidence>
<evidence type="ECO:0000312" key="3">
    <source>
        <dbReference type="EMBL" id="BAP90747.1"/>
    </source>
</evidence>
<feature type="signal peptide" evidence="1">
    <location>
        <begin position="1"/>
        <end position="22"/>
    </location>
</feature>
<feature type="chain" id="PRO_0000434591" description="Aconitate isomerase">
    <location>
        <begin position="23"/>
        <end position="262"/>
    </location>
</feature>
<keyword id="KW-0903">Direct protein sequencing</keyword>
<keyword id="KW-0413">Isomerase</keyword>
<keyword id="KW-0732">Signal</keyword>
<proteinExistence type="evidence at protein level"/>
<sequence>MFPRLPTLALGALLLASTPLLAAQPVTTLTVLSSGGIMGTIREVAPAYEKATGVKLDIAAAPSMGDTPQAIPNRLARNEPADVVLMVGSALDKLVASGQVAKDSRVDLGQSFIAMAVRQGAPKPDISNMDAFKQTLEKAQSVAYSDSASGVYLSRILFPRMQLDKSFMAKARMIPAEPVGAVVARGEAQLGFQQLSELKAVPGIDIVGLIPDQAQKMTLYSGAMVSKSQHPEAARALLQYLASKDAAKAIEDSGLKPVPAQP</sequence>
<reference evidence="3" key="1">
    <citation type="journal article" date="2015" name="FEBS J.">
        <title>Enzymatic characterization and gene identification of aconitate isomerase, an enzyme involved in assimilation of trans-aconitic acid, from Pseudomonas sp. WU-0701.</title>
        <authorList>
            <person name="Yuhara K."/>
            <person name="Yonehara H."/>
            <person name="Hattori T."/>
            <person name="Kobayashi K."/>
            <person name="Kirimura K."/>
        </authorList>
    </citation>
    <scope>NUCLEOTIDE SEQUENCE [GENOMIC DNA]</scope>
    <scope>PROTEIN SEQUENCE OF 23-37</scope>
    <scope>FUNCTION</scope>
    <scope>CATALYTIC ACTIVITY</scope>
    <scope>ACTIVITY REGULATION</scope>
    <scope>BIOPHYSICOCHEMICAL PROPERTIES</scope>
    <scope>SUBUNIT</scope>
    <scope>BIOTECHNOLOGY</scope>
    <scope>SUBSTRATE SPECIFICITY</scope>
    <source>
        <strain evidence="3">WU-0701</strain>
    </source>
</reference>
<name>AIS_PSESP</name>
<accession>A0A0A1H8I4</accession>